<keyword id="KW-0903">Direct protein sequencing</keyword>
<keyword id="KW-0272">Extracellular matrix</keyword>
<keyword id="KW-0325">Glycoprotein</keyword>
<keyword id="KW-0964">Secreted</keyword>
<keyword id="KW-0732">Signal</keyword>
<feature type="signal peptide" evidence="1">
    <location>
        <begin position="1"/>
        <end position="18"/>
    </location>
</feature>
<feature type="chain" id="PRO_0000022038" description="Perphorin-1">
    <location>
        <begin position="19"/>
        <end position="512"/>
    </location>
</feature>
<feature type="glycosylation site" description="N-linked (GlcNAc...) asparagine" evidence="1">
    <location>
        <position position="49"/>
    </location>
</feature>
<feature type="glycosylation site" description="N-linked (GlcNAc...) asparagine" evidence="1">
    <location>
        <position position="96"/>
    </location>
</feature>
<feature type="glycosylation site" description="N-linked (GlcNAc...) asparagine" evidence="1">
    <location>
        <position position="118"/>
    </location>
</feature>
<feature type="glycosylation site" description="N-linked (GlcNAc...) asparagine" evidence="1">
    <location>
        <position position="378"/>
    </location>
</feature>
<feature type="glycosylation site" description="N-linked (GlcNAc...) asparagine" evidence="1">
    <location>
        <position position="381"/>
    </location>
</feature>
<feature type="glycosylation site" description="N-linked (GlcNAc...) asparagine" evidence="1">
    <location>
        <position position="403"/>
    </location>
</feature>
<feature type="glycosylation site" description="N-linked (GlcNAc...) asparagine" evidence="1">
    <location>
        <position position="476"/>
    </location>
</feature>
<reference key="1">
    <citation type="journal article" date="1993" name="EMBO J.">
        <title>How a sex pheromone might act at a concentration below 10(-16) M.</title>
        <authorList>
            <person name="Sumper M."/>
            <person name="Berg E."/>
            <person name="Wenzl S."/>
            <person name="Godl K."/>
        </authorList>
    </citation>
    <scope>NUCLEOTIDE SEQUENCE [MRNA]</scope>
    <scope>PARTIAL PROTEIN SEQUENCE</scope>
</reference>
<comment type="function">
    <text>May be involved in conversion of asexual males and females to the sexual pathway.</text>
</comment>
<comment type="subcellular location">
    <subcellularLocation>
        <location>Secreted</location>
        <location>Extracellular space</location>
        <location>Extracellular matrix</location>
    </subcellularLocation>
</comment>
<accession>P81131</accession>
<organism>
    <name type="scientific">Volvox carteri</name>
    <name type="common">Green alga</name>
    <dbReference type="NCBI Taxonomy" id="3067"/>
    <lineage>
        <taxon>Eukaryota</taxon>
        <taxon>Viridiplantae</taxon>
        <taxon>Chlorophyta</taxon>
        <taxon>core chlorophytes</taxon>
        <taxon>Chlorophyceae</taxon>
        <taxon>CS clade</taxon>
        <taxon>Chlamydomonadales</taxon>
        <taxon>Volvocaceae</taxon>
        <taxon>Volvox</taxon>
    </lineage>
</organism>
<name>PER1_VOLCA</name>
<protein>
    <recommendedName>
        <fullName>Perphorin-1</fullName>
    </recommendedName>
    <alternativeName>
        <fullName>Perphorin I</fullName>
    </alternativeName>
</protein>
<sequence length="512" mass="53879">MMRKALLALCVATAFAVAQAQNVAYPNFPYCQCIKSPSPYSLEPVVKSNRTGQYCFTLRVTKPSPSATGYCATKADIKKIEINVNQVCDVFGNVVNATLNGVPTKVGPAFDTPPDGPNTSRILRFTQLNLGLDSDGAMLCITLGQNDKGKGCTTLEDLCAPPAGAPKGTCSLALFDSKPDCCPISRVSPPAPPPPPPPPPPEPVAVPITPPCKTCVYATITALPPLLFPFQLTPSICQSVADKIAGDLEMIVTSYSIGYSGATITCSGNVIKVCASFSLPPGAPYTGLQADISNALTFWLSLLAPSTGCPAYFANHQVTVTVGGDGDPNSVTCLEGTATTTCKPGNPDFPKCECETKPAATRFAALPTLTQEPGRPSNRTNSTLYCFTLQVVAPLNPNGLCGNTTTLLKAELWGNDIPTQRRKILALAFKAAGASSPLRYLSPSWGSAGEQTLKVSGLNWDASQADGAKICMELSNDTNLKTFCNTGQDTCWINLFSPDKQCCPLFAASLTP</sequence>
<proteinExistence type="evidence at protein level"/>
<evidence type="ECO:0000255" key="1"/>
<dbReference type="EMBL" id="X69801">
    <property type="protein sequence ID" value="CAB56808.1"/>
    <property type="molecule type" value="mRNA"/>
</dbReference>
<dbReference type="PIR" id="S28267">
    <property type="entry name" value="S28267"/>
</dbReference>
<dbReference type="RefSeq" id="XP_002949627.1">
    <property type="nucleotide sequence ID" value="XM_002949581.1"/>
</dbReference>
<dbReference type="GeneID" id="9618902"/>
<dbReference type="KEGG" id="vcn:VOLCADRAFT_104381"/>
<dbReference type="OMA" id="CECETKP"/>
<dbReference type="GO" id="GO:0005576">
    <property type="term" value="C:extracellular region"/>
    <property type="evidence" value="ECO:0007669"/>
    <property type="project" value="UniProtKB-KW"/>
</dbReference>
<dbReference type="InterPro" id="IPR024616">
    <property type="entry name" value="Pherophorin"/>
</dbReference>
<dbReference type="Pfam" id="PF12499">
    <property type="entry name" value="DUF3707"/>
    <property type="match status" value="2"/>
</dbReference>